<keyword id="KW-0067">ATP-binding</keyword>
<keyword id="KW-0173">Coenzyme A biosynthesis</keyword>
<keyword id="KW-0963">Cytoplasm</keyword>
<keyword id="KW-0460">Magnesium</keyword>
<keyword id="KW-0547">Nucleotide-binding</keyword>
<keyword id="KW-0548">Nucleotidyltransferase</keyword>
<keyword id="KW-1185">Reference proteome</keyword>
<keyword id="KW-0808">Transferase</keyword>
<dbReference type="EC" id="2.7.7.3" evidence="1"/>
<dbReference type="EMBL" id="AE009948">
    <property type="protein sequence ID" value="AAM99357.1"/>
    <property type="molecule type" value="Genomic_DNA"/>
</dbReference>
<dbReference type="RefSeq" id="NP_687485.1">
    <property type="nucleotide sequence ID" value="NC_004116.1"/>
</dbReference>
<dbReference type="RefSeq" id="WP_000161892.1">
    <property type="nucleotide sequence ID" value="NC_004116.1"/>
</dbReference>
<dbReference type="SMR" id="Q8E1A6"/>
<dbReference type="STRING" id="208435.SAG0454"/>
<dbReference type="KEGG" id="sag:SAG0454"/>
<dbReference type="PATRIC" id="fig|208435.3.peg.451"/>
<dbReference type="HOGENOM" id="CLU_100149_0_1_9"/>
<dbReference type="OrthoDB" id="9806661at2"/>
<dbReference type="UniPathway" id="UPA00241">
    <property type="reaction ID" value="UER00355"/>
</dbReference>
<dbReference type="Proteomes" id="UP000000821">
    <property type="component" value="Chromosome"/>
</dbReference>
<dbReference type="GO" id="GO:0005737">
    <property type="term" value="C:cytoplasm"/>
    <property type="evidence" value="ECO:0007669"/>
    <property type="project" value="UniProtKB-SubCell"/>
</dbReference>
<dbReference type="GO" id="GO:0005524">
    <property type="term" value="F:ATP binding"/>
    <property type="evidence" value="ECO:0007669"/>
    <property type="project" value="UniProtKB-KW"/>
</dbReference>
<dbReference type="GO" id="GO:0004595">
    <property type="term" value="F:pantetheine-phosphate adenylyltransferase activity"/>
    <property type="evidence" value="ECO:0007669"/>
    <property type="project" value="UniProtKB-UniRule"/>
</dbReference>
<dbReference type="GO" id="GO:0015937">
    <property type="term" value="P:coenzyme A biosynthetic process"/>
    <property type="evidence" value="ECO:0007669"/>
    <property type="project" value="UniProtKB-UniRule"/>
</dbReference>
<dbReference type="CDD" id="cd02163">
    <property type="entry name" value="PPAT"/>
    <property type="match status" value="1"/>
</dbReference>
<dbReference type="Gene3D" id="3.40.50.620">
    <property type="entry name" value="HUPs"/>
    <property type="match status" value="1"/>
</dbReference>
<dbReference type="HAMAP" id="MF_00151">
    <property type="entry name" value="PPAT_bact"/>
    <property type="match status" value="1"/>
</dbReference>
<dbReference type="InterPro" id="IPR004821">
    <property type="entry name" value="Cyt_trans-like"/>
</dbReference>
<dbReference type="InterPro" id="IPR001980">
    <property type="entry name" value="PPAT"/>
</dbReference>
<dbReference type="InterPro" id="IPR014729">
    <property type="entry name" value="Rossmann-like_a/b/a_fold"/>
</dbReference>
<dbReference type="NCBIfam" id="TIGR01510">
    <property type="entry name" value="coaD_prev_kdtB"/>
    <property type="match status" value="1"/>
</dbReference>
<dbReference type="NCBIfam" id="TIGR00125">
    <property type="entry name" value="cyt_tran_rel"/>
    <property type="match status" value="1"/>
</dbReference>
<dbReference type="PANTHER" id="PTHR21342">
    <property type="entry name" value="PHOSPHOPANTETHEINE ADENYLYLTRANSFERASE"/>
    <property type="match status" value="1"/>
</dbReference>
<dbReference type="PANTHER" id="PTHR21342:SF1">
    <property type="entry name" value="PHOSPHOPANTETHEINE ADENYLYLTRANSFERASE"/>
    <property type="match status" value="1"/>
</dbReference>
<dbReference type="Pfam" id="PF01467">
    <property type="entry name" value="CTP_transf_like"/>
    <property type="match status" value="1"/>
</dbReference>
<dbReference type="PRINTS" id="PR01020">
    <property type="entry name" value="LPSBIOSNTHSS"/>
</dbReference>
<dbReference type="SUPFAM" id="SSF52374">
    <property type="entry name" value="Nucleotidylyl transferase"/>
    <property type="match status" value="1"/>
</dbReference>
<comment type="function">
    <text evidence="1">Reversibly transfers an adenylyl group from ATP to 4'-phosphopantetheine, yielding dephospho-CoA (dPCoA) and pyrophosphate.</text>
</comment>
<comment type="catalytic activity">
    <reaction evidence="1">
        <text>(R)-4'-phosphopantetheine + ATP + H(+) = 3'-dephospho-CoA + diphosphate</text>
        <dbReference type="Rhea" id="RHEA:19801"/>
        <dbReference type="ChEBI" id="CHEBI:15378"/>
        <dbReference type="ChEBI" id="CHEBI:30616"/>
        <dbReference type="ChEBI" id="CHEBI:33019"/>
        <dbReference type="ChEBI" id="CHEBI:57328"/>
        <dbReference type="ChEBI" id="CHEBI:61723"/>
        <dbReference type="EC" id="2.7.7.3"/>
    </reaction>
</comment>
<comment type="cofactor">
    <cofactor evidence="1">
        <name>Mg(2+)</name>
        <dbReference type="ChEBI" id="CHEBI:18420"/>
    </cofactor>
</comment>
<comment type="pathway">
    <text evidence="1">Cofactor biosynthesis; coenzyme A biosynthesis; CoA from (R)-pantothenate: step 4/5.</text>
</comment>
<comment type="subunit">
    <text evidence="1">Homohexamer.</text>
</comment>
<comment type="subcellular location">
    <subcellularLocation>
        <location evidence="1">Cytoplasm</location>
    </subcellularLocation>
</comment>
<comment type="similarity">
    <text evidence="1">Belongs to the bacterial CoaD family.</text>
</comment>
<name>COAD_STRA5</name>
<accession>Q8E1A6</accession>
<gene>
    <name evidence="1" type="primary">coaD</name>
    <name type="ordered locus">SAG0454</name>
</gene>
<evidence type="ECO:0000255" key="1">
    <source>
        <dbReference type="HAMAP-Rule" id="MF_00151"/>
    </source>
</evidence>
<feature type="chain" id="PRO_0000156280" description="Phosphopantetheine adenylyltransferase">
    <location>
        <begin position="1"/>
        <end position="161"/>
    </location>
</feature>
<feature type="binding site" evidence="1">
    <location>
        <begin position="10"/>
        <end position="11"/>
    </location>
    <ligand>
        <name>ATP</name>
        <dbReference type="ChEBI" id="CHEBI:30616"/>
    </ligand>
</feature>
<feature type="binding site" evidence="1">
    <location>
        <position position="10"/>
    </location>
    <ligand>
        <name>substrate</name>
    </ligand>
</feature>
<feature type="binding site" evidence="1">
    <location>
        <position position="18"/>
    </location>
    <ligand>
        <name>ATP</name>
        <dbReference type="ChEBI" id="CHEBI:30616"/>
    </ligand>
</feature>
<feature type="binding site" evidence="1">
    <location>
        <position position="42"/>
    </location>
    <ligand>
        <name>substrate</name>
    </ligand>
</feature>
<feature type="binding site" evidence="1">
    <location>
        <position position="75"/>
    </location>
    <ligand>
        <name>substrate</name>
    </ligand>
</feature>
<feature type="binding site" evidence="1">
    <location>
        <position position="89"/>
    </location>
    <ligand>
        <name>substrate</name>
    </ligand>
</feature>
<feature type="binding site" evidence="1">
    <location>
        <begin position="90"/>
        <end position="92"/>
    </location>
    <ligand>
        <name>ATP</name>
        <dbReference type="ChEBI" id="CHEBI:30616"/>
    </ligand>
</feature>
<feature type="binding site" evidence="1">
    <location>
        <position position="100"/>
    </location>
    <ligand>
        <name>ATP</name>
        <dbReference type="ChEBI" id="CHEBI:30616"/>
    </ligand>
</feature>
<feature type="binding site" evidence="1">
    <location>
        <begin position="125"/>
        <end position="131"/>
    </location>
    <ligand>
        <name>ATP</name>
        <dbReference type="ChEBI" id="CHEBI:30616"/>
    </ligand>
</feature>
<feature type="site" description="Transition state stabilizer" evidence="1">
    <location>
        <position position="18"/>
    </location>
</feature>
<reference key="1">
    <citation type="journal article" date="2002" name="Proc. Natl. Acad. Sci. U.S.A.">
        <title>Complete genome sequence and comparative genomic analysis of an emerging human pathogen, serotype V Streptococcus agalactiae.</title>
        <authorList>
            <person name="Tettelin H."/>
            <person name="Masignani V."/>
            <person name="Cieslewicz M.J."/>
            <person name="Eisen J.A."/>
            <person name="Peterson S.N."/>
            <person name="Wessels M.R."/>
            <person name="Paulsen I.T."/>
            <person name="Nelson K.E."/>
            <person name="Margarit I."/>
            <person name="Read T.D."/>
            <person name="Madoff L.C."/>
            <person name="Wolf A.M."/>
            <person name="Beanan M.J."/>
            <person name="Brinkac L.M."/>
            <person name="Daugherty S.C."/>
            <person name="DeBoy R.T."/>
            <person name="Durkin A.S."/>
            <person name="Kolonay J.F."/>
            <person name="Madupu R."/>
            <person name="Lewis M.R."/>
            <person name="Radune D."/>
            <person name="Fedorova N.B."/>
            <person name="Scanlan D."/>
            <person name="Khouri H.M."/>
            <person name="Mulligan S."/>
            <person name="Carty H.A."/>
            <person name="Cline R.T."/>
            <person name="Van Aken S.E."/>
            <person name="Gill J."/>
            <person name="Scarselli M."/>
            <person name="Mora M."/>
            <person name="Iacobini E.T."/>
            <person name="Brettoni C."/>
            <person name="Galli G."/>
            <person name="Mariani M."/>
            <person name="Vegni F."/>
            <person name="Maione D."/>
            <person name="Rinaudo D."/>
            <person name="Rappuoli R."/>
            <person name="Telford J.L."/>
            <person name="Kasper D.L."/>
            <person name="Grandi G."/>
            <person name="Fraser C.M."/>
        </authorList>
    </citation>
    <scope>NUCLEOTIDE SEQUENCE [LARGE SCALE GENOMIC DNA]</scope>
    <source>
        <strain>ATCC BAA-611 / 2603 V/R</strain>
    </source>
</reference>
<organism>
    <name type="scientific">Streptococcus agalactiae serotype V (strain ATCC BAA-611 / 2603 V/R)</name>
    <dbReference type="NCBI Taxonomy" id="208435"/>
    <lineage>
        <taxon>Bacteria</taxon>
        <taxon>Bacillati</taxon>
        <taxon>Bacillota</taxon>
        <taxon>Bacilli</taxon>
        <taxon>Lactobacillales</taxon>
        <taxon>Streptococcaceae</taxon>
        <taxon>Streptococcus</taxon>
    </lineage>
</organism>
<proteinExistence type="inferred from homology"/>
<sequence>MTKKALFTGSFDPVTNGHLDIIERASYLFDHVYIGLFYNLEKQGYFSIECRKKMLEEAIRQFKNVSVLVAQDRLAVDLAREVGAKYFVRGLRNSQDFDYEANLEFFNKQLADDIETVYLSTSPSLSPISSSRIRELIHFKASVKPFVPKSVVREVEKMSEE</sequence>
<protein>
    <recommendedName>
        <fullName evidence="1">Phosphopantetheine adenylyltransferase</fullName>
        <ecNumber evidence="1">2.7.7.3</ecNumber>
    </recommendedName>
    <alternativeName>
        <fullName evidence="1">Dephospho-CoA pyrophosphorylase</fullName>
    </alternativeName>
    <alternativeName>
        <fullName evidence="1">Pantetheine-phosphate adenylyltransferase</fullName>
        <shortName evidence="1">PPAT</shortName>
    </alternativeName>
</protein>